<organism>
    <name type="scientific">Anopheles gambiae</name>
    <name type="common">African malaria mosquito</name>
    <dbReference type="NCBI Taxonomy" id="7165"/>
    <lineage>
        <taxon>Eukaryota</taxon>
        <taxon>Metazoa</taxon>
        <taxon>Ecdysozoa</taxon>
        <taxon>Arthropoda</taxon>
        <taxon>Hexapoda</taxon>
        <taxon>Insecta</taxon>
        <taxon>Pterygota</taxon>
        <taxon>Neoptera</taxon>
        <taxon>Endopterygota</taxon>
        <taxon>Diptera</taxon>
        <taxon>Nematocera</taxon>
        <taxon>Culicoidea</taxon>
        <taxon>Culicidae</taxon>
        <taxon>Anophelinae</taxon>
        <taxon>Anopheles</taxon>
    </lineage>
</organism>
<feature type="chain" id="PRO_0000183282" description="Cytochrome c oxidase subunit 1">
    <location>
        <begin position="1"/>
        <end position="514"/>
    </location>
</feature>
<feature type="transmembrane region" description="Helical" evidence="3">
    <location>
        <begin position="16"/>
        <end position="36"/>
    </location>
</feature>
<feature type="transmembrane region" description="Helical" evidence="3">
    <location>
        <begin position="55"/>
        <end position="75"/>
    </location>
</feature>
<feature type="transmembrane region" description="Helical" evidence="3">
    <location>
        <begin position="101"/>
        <end position="121"/>
    </location>
</feature>
<feature type="transmembrane region" description="Helical" evidence="3">
    <location>
        <begin position="144"/>
        <end position="164"/>
    </location>
</feature>
<feature type="transmembrane region" description="Helical" evidence="3">
    <location>
        <begin position="182"/>
        <end position="202"/>
    </location>
</feature>
<feature type="transmembrane region" description="Helical" evidence="3">
    <location>
        <begin position="233"/>
        <end position="253"/>
    </location>
</feature>
<feature type="transmembrane region" description="Helical" evidence="3">
    <location>
        <begin position="267"/>
        <end position="287"/>
    </location>
</feature>
<feature type="transmembrane region" description="Helical" evidence="3">
    <location>
        <begin position="304"/>
        <end position="324"/>
    </location>
</feature>
<feature type="transmembrane region" description="Helical" evidence="3">
    <location>
        <begin position="337"/>
        <end position="357"/>
    </location>
</feature>
<feature type="transmembrane region" description="Helical" evidence="3">
    <location>
        <begin position="379"/>
        <end position="399"/>
    </location>
</feature>
<feature type="transmembrane region" description="Helical" evidence="3">
    <location>
        <begin position="415"/>
        <end position="435"/>
    </location>
</feature>
<feature type="transmembrane region" description="Helical" evidence="3">
    <location>
        <begin position="451"/>
        <end position="471"/>
    </location>
</feature>
<feature type="binding site" evidence="2">
    <location>
        <position position="39"/>
    </location>
    <ligand>
        <name>Ca(2+)</name>
        <dbReference type="ChEBI" id="CHEBI:29108"/>
    </ligand>
</feature>
<feature type="binding site" evidence="2">
    <location>
        <position position="44"/>
    </location>
    <ligand>
        <name>Ca(2+)</name>
        <dbReference type="ChEBI" id="CHEBI:29108"/>
    </ligand>
</feature>
<feature type="binding site" description="axial binding residue" evidence="2">
    <location>
        <position position="60"/>
    </location>
    <ligand>
        <name>Fe(II)-heme a</name>
        <dbReference type="ChEBI" id="CHEBI:61715"/>
        <note>low-spin</note>
    </ligand>
    <ligandPart>
        <name>Fe</name>
        <dbReference type="ChEBI" id="CHEBI:18248"/>
    </ligandPart>
</feature>
<feature type="binding site" evidence="2">
    <location>
        <position position="239"/>
    </location>
    <ligand>
        <name>Cu cation</name>
        <dbReference type="ChEBI" id="CHEBI:23378"/>
        <label>B</label>
    </ligand>
</feature>
<feature type="binding site" evidence="1">
    <location>
        <position position="243"/>
    </location>
    <ligand>
        <name>O2</name>
        <dbReference type="ChEBI" id="CHEBI:15379"/>
    </ligand>
</feature>
<feature type="binding site" evidence="2">
    <location>
        <position position="289"/>
    </location>
    <ligand>
        <name>Cu cation</name>
        <dbReference type="ChEBI" id="CHEBI:23378"/>
        <label>B</label>
    </ligand>
</feature>
<feature type="binding site" evidence="2">
    <location>
        <position position="290"/>
    </location>
    <ligand>
        <name>Cu cation</name>
        <dbReference type="ChEBI" id="CHEBI:23378"/>
        <label>B</label>
    </ligand>
</feature>
<feature type="binding site" evidence="2">
    <location>
        <position position="367"/>
    </location>
    <ligand>
        <name>Mg(2+)</name>
        <dbReference type="ChEBI" id="CHEBI:18420"/>
        <note>ligand shared with subunit 2</note>
    </ligand>
</feature>
<feature type="binding site" evidence="2">
    <location>
        <position position="368"/>
    </location>
    <ligand>
        <name>Mg(2+)</name>
        <dbReference type="ChEBI" id="CHEBI:18420"/>
        <note>ligand shared with subunit 2</note>
    </ligand>
</feature>
<feature type="binding site" description="axial binding residue" evidence="2">
    <location>
        <position position="375"/>
    </location>
    <ligand>
        <name>heme a3</name>
        <dbReference type="ChEBI" id="CHEBI:83282"/>
        <note>high-spin</note>
    </ligand>
    <ligandPart>
        <name>Fe</name>
        <dbReference type="ChEBI" id="CHEBI:18248"/>
    </ligandPart>
</feature>
<feature type="binding site" description="axial binding residue" evidence="2">
    <location>
        <position position="377"/>
    </location>
    <ligand>
        <name>Fe(II)-heme a</name>
        <dbReference type="ChEBI" id="CHEBI:61715"/>
        <note>low-spin</note>
    </ligand>
    <ligandPart>
        <name>Fe</name>
        <dbReference type="ChEBI" id="CHEBI:18248"/>
    </ligandPart>
</feature>
<feature type="cross-link" description="1'-histidyl-3'-tyrosine (His-Tyr)" evidence="2">
    <location>
        <begin position="239"/>
        <end position="243"/>
    </location>
</feature>
<evidence type="ECO:0000250" key="1">
    <source>
        <dbReference type="UniProtKB" id="P00396"/>
    </source>
</evidence>
<evidence type="ECO:0000250" key="2">
    <source>
        <dbReference type="UniProtKB" id="P00401"/>
    </source>
</evidence>
<evidence type="ECO:0000255" key="3"/>
<evidence type="ECO:0000305" key="4"/>
<protein>
    <recommendedName>
        <fullName>Cytochrome c oxidase subunit 1</fullName>
        <ecNumber>7.1.1.9</ecNumber>
    </recommendedName>
    <alternativeName>
        <fullName>Cytochrome c oxidase polypeptide I</fullName>
    </alternativeName>
</protein>
<keyword id="KW-0106">Calcium</keyword>
<keyword id="KW-0186">Copper</keyword>
<keyword id="KW-0249">Electron transport</keyword>
<keyword id="KW-0349">Heme</keyword>
<keyword id="KW-0408">Iron</keyword>
<keyword id="KW-0460">Magnesium</keyword>
<keyword id="KW-0472">Membrane</keyword>
<keyword id="KW-0479">Metal-binding</keyword>
<keyword id="KW-0496">Mitochondrion</keyword>
<keyword id="KW-0999">Mitochondrion inner membrane</keyword>
<keyword id="KW-1185">Reference proteome</keyword>
<keyword id="KW-0679">Respiratory chain</keyword>
<keyword id="KW-1278">Translocase</keyword>
<keyword id="KW-0812">Transmembrane</keyword>
<keyword id="KW-1133">Transmembrane helix</keyword>
<keyword id="KW-0813">Transport</keyword>
<name>COX1_ANOGA</name>
<geneLocation type="mitochondrion"/>
<proteinExistence type="inferred from homology"/>
<dbReference type="EC" id="7.1.1.9"/>
<dbReference type="EMBL" id="L20934">
    <property type="protein sequence ID" value="AAD12191.1"/>
    <property type="status" value="ALT_INIT"/>
    <property type="molecule type" value="Genomic_DNA"/>
</dbReference>
<dbReference type="PIR" id="T09801">
    <property type="entry name" value="T09801"/>
</dbReference>
<dbReference type="RefSeq" id="NP_008070.1">
    <property type="nucleotide sequence ID" value="NC_002084.1"/>
</dbReference>
<dbReference type="SMR" id="P34838"/>
<dbReference type="FunCoup" id="P34838">
    <property type="interactions" value="132"/>
</dbReference>
<dbReference type="STRING" id="7165.P34838"/>
<dbReference type="PaxDb" id="7165-AGAP028364-PA"/>
<dbReference type="VEuPathDB" id="VectorBase:AGAMI1_013522"/>
<dbReference type="VEuPathDB" id="VectorBase:AGAP028364"/>
<dbReference type="eggNOG" id="KOG4769">
    <property type="taxonomic scope" value="Eukaryota"/>
</dbReference>
<dbReference type="HOGENOM" id="CLU_011899_7_3_1"/>
<dbReference type="InParanoid" id="P34838"/>
<dbReference type="UniPathway" id="UPA00705"/>
<dbReference type="Proteomes" id="UP000007062">
    <property type="component" value="Mitochondrion"/>
</dbReference>
<dbReference type="GO" id="GO:0005743">
    <property type="term" value="C:mitochondrial inner membrane"/>
    <property type="evidence" value="ECO:0007669"/>
    <property type="project" value="UniProtKB-SubCell"/>
</dbReference>
<dbReference type="GO" id="GO:0045277">
    <property type="term" value="C:respiratory chain complex IV"/>
    <property type="evidence" value="ECO:0000318"/>
    <property type="project" value="GO_Central"/>
</dbReference>
<dbReference type="GO" id="GO:0004129">
    <property type="term" value="F:cytochrome-c oxidase activity"/>
    <property type="evidence" value="ECO:0007669"/>
    <property type="project" value="UniProtKB-EC"/>
</dbReference>
<dbReference type="GO" id="GO:0020037">
    <property type="term" value="F:heme binding"/>
    <property type="evidence" value="ECO:0007669"/>
    <property type="project" value="InterPro"/>
</dbReference>
<dbReference type="GO" id="GO:0046872">
    <property type="term" value="F:metal ion binding"/>
    <property type="evidence" value="ECO:0007669"/>
    <property type="project" value="UniProtKB-KW"/>
</dbReference>
<dbReference type="GO" id="GO:0009060">
    <property type="term" value="P:aerobic respiration"/>
    <property type="evidence" value="ECO:0000318"/>
    <property type="project" value="GO_Central"/>
</dbReference>
<dbReference type="GO" id="GO:0006119">
    <property type="term" value="P:oxidative phosphorylation"/>
    <property type="evidence" value="ECO:0007669"/>
    <property type="project" value="UniProtKB-UniPathway"/>
</dbReference>
<dbReference type="GO" id="GO:0022904">
    <property type="term" value="P:respiratory electron transport chain"/>
    <property type="evidence" value="ECO:0000318"/>
    <property type="project" value="GO_Central"/>
</dbReference>
<dbReference type="CDD" id="cd01663">
    <property type="entry name" value="Cyt_c_Oxidase_I"/>
    <property type="match status" value="1"/>
</dbReference>
<dbReference type="FunFam" id="1.20.210.10:FF:000001">
    <property type="entry name" value="Cytochrome c oxidase subunit 1"/>
    <property type="match status" value="1"/>
</dbReference>
<dbReference type="Gene3D" id="1.20.210.10">
    <property type="entry name" value="Cytochrome c oxidase-like, subunit I domain"/>
    <property type="match status" value="1"/>
</dbReference>
<dbReference type="InterPro" id="IPR023616">
    <property type="entry name" value="Cyt_c_oxase-like_su1_dom"/>
</dbReference>
<dbReference type="InterPro" id="IPR036927">
    <property type="entry name" value="Cyt_c_oxase-like_su1_sf"/>
</dbReference>
<dbReference type="InterPro" id="IPR000883">
    <property type="entry name" value="Cyt_C_Oxase_1"/>
</dbReference>
<dbReference type="InterPro" id="IPR023615">
    <property type="entry name" value="Cyt_c_Oxase_su1_BS"/>
</dbReference>
<dbReference type="InterPro" id="IPR033944">
    <property type="entry name" value="Cyt_c_oxase_su1_dom"/>
</dbReference>
<dbReference type="PANTHER" id="PTHR10422">
    <property type="entry name" value="CYTOCHROME C OXIDASE SUBUNIT 1"/>
    <property type="match status" value="1"/>
</dbReference>
<dbReference type="PANTHER" id="PTHR10422:SF18">
    <property type="entry name" value="CYTOCHROME C OXIDASE SUBUNIT 1"/>
    <property type="match status" value="1"/>
</dbReference>
<dbReference type="Pfam" id="PF00115">
    <property type="entry name" value="COX1"/>
    <property type="match status" value="1"/>
</dbReference>
<dbReference type="PRINTS" id="PR01165">
    <property type="entry name" value="CYCOXIDASEI"/>
</dbReference>
<dbReference type="SUPFAM" id="SSF81442">
    <property type="entry name" value="Cytochrome c oxidase subunit I-like"/>
    <property type="match status" value="1"/>
</dbReference>
<dbReference type="PROSITE" id="PS50855">
    <property type="entry name" value="COX1"/>
    <property type="match status" value="1"/>
</dbReference>
<dbReference type="PROSITE" id="PS00077">
    <property type="entry name" value="COX1_CUB"/>
    <property type="match status" value="1"/>
</dbReference>
<accession>P34838</accession>
<sequence length="514" mass="56841">MSRQWLFSTNHKDIGTLYFIFGAWAGMVGTSLSILIRAELGHPGAFIGDDQIYNVIVTAHAFIMIFFMVMPIMIGGFGNWLVPLMLGAPDMAFPRMNNMSFWMLPPSLTLLISSSMVENGAGTGWTVYPPLSSGIAHAGASVDLAIFSLHLAGISSILGAVNFITTVINMRSPGITLDRMPLFVWSVVITAVLLLLSLPVLAGAITMLLTDRNLNTSFFDPAGGGDPILYQHLFWFFGHPEVYILILPGFGMISHIITQESGKKETFGNLGMIYAMLAIGLLGFIVWAHHMFTVGMDVDTRAYFTSATMIIAVPTGIKIFSWLATLHGTQLTYSPAMLWAFGFVFLFTVGGLTGVVLANSSIDIVLHDTYYVVAHFHYVLSMGAVFAIMAGFVHWYPLLTGLTMNPTWLKIQFSIMFVGVNLTFFPQHFLGLAGMPRRYSDFPDSYLTWNVVSSLGSTISLFAILYFLFIIWESMITQRTPAFPMQLSSSIEWYHTLPPAEHTYAELPLLTNNF</sequence>
<comment type="function">
    <text evidence="2">Component of the cytochrome c oxidase, the last enzyme in the mitochondrial electron transport chain which drives oxidative phosphorylation. The respiratory chain contains 3 multisubunit complexes succinate dehydrogenase (complex II, CII), ubiquinol-cytochrome c oxidoreductase (cytochrome b-c1 complex, complex III, CIII) and cytochrome c oxidase (complex IV, CIV), that cooperate to transfer electrons derived from NADH and succinate to molecular oxygen, creating an electrochemical gradient over the inner membrane that drives transmembrane transport and the ATP synthase. Cytochrome c oxidase is the component of the respiratory chain that catalyzes the reduction of oxygen to water. Electrons originating from reduced cytochrome c in the intermembrane space (IMS) are transferred via the dinuclear copper A center (CU(A)) of subunit 2 and heme A of subunit 1 to the active site in subunit 1, a binuclear center (BNC) formed by heme A3 and copper B (CU(B)). The BNC reduces molecular oxygen to 2 water molecules using 4 electrons from cytochrome c in the IMS and 4 protons from the mitochondrial matrix.</text>
</comment>
<comment type="catalytic activity">
    <reaction evidence="2">
        <text>4 Fe(II)-[cytochrome c] + O2 + 8 H(+)(in) = 4 Fe(III)-[cytochrome c] + 2 H2O + 4 H(+)(out)</text>
        <dbReference type="Rhea" id="RHEA:11436"/>
        <dbReference type="Rhea" id="RHEA-COMP:10350"/>
        <dbReference type="Rhea" id="RHEA-COMP:14399"/>
        <dbReference type="ChEBI" id="CHEBI:15377"/>
        <dbReference type="ChEBI" id="CHEBI:15378"/>
        <dbReference type="ChEBI" id="CHEBI:15379"/>
        <dbReference type="ChEBI" id="CHEBI:29033"/>
        <dbReference type="ChEBI" id="CHEBI:29034"/>
        <dbReference type="EC" id="7.1.1.9"/>
    </reaction>
    <physiologicalReaction direction="left-to-right" evidence="2">
        <dbReference type="Rhea" id="RHEA:11437"/>
    </physiologicalReaction>
</comment>
<comment type="cofactor">
    <cofactor evidence="2">
        <name>heme</name>
        <dbReference type="ChEBI" id="CHEBI:30413"/>
    </cofactor>
    <text evidence="2">Binds 2 heme A groups non-covalently per subunit.</text>
</comment>
<comment type="cofactor">
    <cofactor evidence="2">
        <name>Cu cation</name>
        <dbReference type="ChEBI" id="CHEBI:23378"/>
    </cofactor>
    <text evidence="2">Binds a copper B center.</text>
</comment>
<comment type="pathway">
    <text evidence="2">Energy metabolism; oxidative phosphorylation.</text>
</comment>
<comment type="subunit">
    <text evidence="2">Component of the cytochrome c oxidase (complex IV, CIV), a multisubunit enzyme composed of a catalytic core of 3 subunits and several supernumerary subunits. The complex exists as a monomer or a dimer and forms supercomplexes (SCs) in the inner mitochondrial membrane with ubiquinol-cytochrome c oxidoreductase (cytochrome b-c1 complex, complex III, CIII).</text>
</comment>
<comment type="subcellular location">
    <subcellularLocation>
        <location evidence="2">Mitochondrion inner membrane</location>
        <topology evidence="2">Multi-pass membrane protein</topology>
    </subcellularLocation>
</comment>
<comment type="similarity">
    <text evidence="4">Belongs to the heme-copper respiratory oxidase family.</text>
</comment>
<comment type="sequence caution" evidence="4">
    <conflict type="erroneous initiation">
        <sequence resource="EMBL-CDS" id="AAD12191"/>
    </conflict>
</comment>
<reference key="1">
    <citation type="journal article" date="1993" name="Insect Mol. Biol.">
        <title>The mitochondrial genome of the mosquito Anopheles gambiae: DNA sequence, genome organization, and comparisons with mitochondrial sequences of other insects.</title>
        <authorList>
            <person name="Beard C.B."/>
            <person name="Hamm D.M."/>
            <person name="Collins F.H."/>
        </authorList>
    </citation>
    <scope>NUCLEOTIDE SEQUENCE [LARGE SCALE GENOMIC DNA]</scope>
    <source>
        <strain>G3</strain>
    </source>
</reference>
<gene>
    <name type="primary">COI</name>
</gene>